<protein>
    <recommendedName>
        <fullName>Protein phosphatase 1 regulatory subunit 1A</fullName>
    </recommendedName>
    <alternativeName>
        <fullName>Protein phosphatase inhibitor 1</fullName>
        <shortName>I-1</shortName>
        <shortName>IPP-1</shortName>
    </alternativeName>
</protein>
<proteinExistence type="evidence at protein level"/>
<dbReference type="EMBL" id="U48707">
    <property type="protein sequence ID" value="AAB02402.1"/>
    <property type="molecule type" value="mRNA"/>
</dbReference>
<dbReference type="EMBL" id="AY063766">
    <property type="protein sequence ID" value="AAL48321.1"/>
    <property type="molecule type" value="mRNA"/>
</dbReference>
<dbReference type="EMBL" id="CR457003">
    <property type="protein sequence ID" value="CAG33284.1"/>
    <property type="molecule type" value="mRNA"/>
</dbReference>
<dbReference type="EMBL" id="BC022470">
    <property type="protein sequence ID" value="AAH22470.1"/>
    <property type="molecule type" value="mRNA"/>
</dbReference>
<dbReference type="CCDS" id="CCDS44912.1"/>
<dbReference type="RefSeq" id="NP_006732.3">
    <property type="nucleotide sequence ID" value="NM_006741.3"/>
</dbReference>
<dbReference type="BMRB" id="Q13522"/>
<dbReference type="BioGRID" id="111496">
    <property type="interactions" value="16"/>
</dbReference>
<dbReference type="FunCoup" id="Q13522">
    <property type="interactions" value="598"/>
</dbReference>
<dbReference type="IntAct" id="Q13522">
    <property type="interactions" value="11"/>
</dbReference>
<dbReference type="STRING" id="9606.ENSP00000257905"/>
<dbReference type="BindingDB" id="Q13522"/>
<dbReference type="iPTMnet" id="Q13522"/>
<dbReference type="PhosphoSitePlus" id="Q13522"/>
<dbReference type="BioMuta" id="PPP1R1A"/>
<dbReference type="DMDM" id="296452864"/>
<dbReference type="jPOST" id="Q13522"/>
<dbReference type="MassIVE" id="Q13522"/>
<dbReference type="PaxDb" id="9606-ENSP00000257905"/>
<dbReference type="PeptideAtlas" id="Q13522"/>
<dbReference type="ProteomicsDB" id="59517"/>
<dbReference type="Antibodypedia" id="27544">
    <property type="antibodies" value="88 antibodies from 29 providers"/>
</dbReference>
<dbReference type="DNASU" id="5502"/>
<dbReference type="Ensembl" id="ENST00000257905.13">
    <property type="protein sequence ID" value="ENSP00000257905.8"/>
    <property type="gene ID" value="ENSG00000135447.17"/>
</dbReference>
<dbReference type="GeneID" id="5502"/>
<dbReference type="KEGG" id="hsa:5502"/>
<dbReference type="MANE-Select" id="ENST00000257905.13">
    <property type="protein sequence ID" value="ENSP00000257905.8"/>
    <property type="RefSeq nucleotide sequence ID" value="NM_006741.4"/>
    <property type="RefSeq protein sequence ID" value="NP_006732.3"/>
</dbReference>
<dbReference type="UCSC" id="uc001sgg.3">
    <property type="organism name" value="human"/>
</dbReference>
<dbReference type="AGR" id="HGNC:9286"/>
<dbReference type="CTD" id="5502"/>
<dbReference type="DisGeNET" id="5502"/>
<dbReference type="GeneCards" id="PPP1R1A"/>
<dbReference type="HGNC" id="HGNC:9286">
    <property type="gene designation" value="PPP1R1A"/>
</dbReference>
<dbReference type="HPA" id="ENSG00000135447">
    <property type="expression patterns" value="Tissue enhanced (skeletal muscle, tongue)"/>
</dbReference>
<dbReference type="MIM" id="613246">
    <property type="type" value="gene"/>
</dbReference>
<dbReference type="neXtProt" id="NX_Q13522"/>
<dbReference type="OpenTargets" id="ENSG00000135447"/>
<dbReference type="PharmGKB" id="PA33636"/>
<dbReference type="VEuPathDB" id="HostDB:ENSG00000135447"/>
<dbReference type="eggNOG" id="ENOG502S1WG">
    <property type="taxonomic scope" value="Eukaryota"/>
</dbReference>
<dbReference type="GeneTree" id="ENSGT00940000161232"/>
<dbReference type="HOGENOM" id="CLU_092269_1_0_1"/>
<dbReference type="InParanoid" id="Q13522"/>
<dbReference type="OMA" id="PKTQERC"/>
<dbReference type="OrthoDB" id="9940275at2759"/>
<dbReference type="PAN-GO" id="Q13522">
    <property type="GO annotations" value="2 GO annotations based on evolutionary models"/>
</dbReference>
<dbReference type="PhylomeDB" id="Q13522"/>
<dbReference type="TreeFam" id="TF332576"/>
<dbReference type="PathwayCommons" id="Q13522"/>
<dbReference type="SignaLink" id="Q13522"/>
<dbReference type="SIGNOR" id="Q13522"/>
<dbReference type="BioGRID-ORCS" id="5502">
    <property type="hits" value="31 hits in 1146 CRISPR screens"/>
</dbReference>
<dbReference type="GenomeRNAi" id="5502"/>
<dbReference type="Pharos" id="Q13522">
    <property type="development level" value="Tbio"/>
</dbReference>
<dbReference type="PRO" id="PR:Q13522"/>
<dbReference type="Proteomes" id="UP000005640">
    <property type="component" value="Chromosome 12"/>
</dbReference>
<dbReference type="RNAct" id="Q13522">
    <property type="molecule type" value="protein"/>
</dbReference>
<dbReference type="Bgee" id="ENSG00000135447">
    <property type="expression patterns" value="Expressed in triceps brachii and 181 other cell types or tissues"/>
</dbReference>
<dbReference type="ExpressionAtlas" id="Q13522">
    <property type="expression patterns" value="baseline and differential"/>
</dbReference>
<dbReference type="GO" id="GO:0005737">
    <property type="term" value="C:cytoplasm"/>
    <property type="evidence" value="ECO:0000318"/>
    <property type="project" value="GO_Central"/>
</dbReference>
<dbReference type="GO" id="GO:0004865">
    <property type="term" value="F:protein serine/threonine phosphatase inhibitor activity"/>
    <property type="evidence" value="ECO:0000304"/>
    <property type="project" value="ProtInc"/>
</dbReference>
<dbReference type="GO" id="GO:0005977">
    <property type="term" value="P:glycogen metabolic process"/>
    <property type="evidence" value="ECO:0007669"/>
    <property type="project" value="UniProtKB-KW"/>
</dbReference>
<dbReference type="GO" id="GO:0035556">
    <property type="term" value="P:intracellular signal transduction"/>
    <property type="evidence" value="ECO:0000318"/>
    <property type="project" value="GO_Central"/>
</dbReference>
<dbReference type="InterPro" id="IPR008466">
    <property type="entry name" value="PPP1R1A/B/C"/>
</dbReference>
<dbReference type="PANTHER" id="PTHR15417:SF4">
    <property type="entry name" value="PROTEIN PHOSPHATASE 1 REGULATORY SUBUNIT 1A"/>
    <property type="match status" value="1"/>
</dbReference>
<dbReference type="PANTHER" id="PTHR15417">
    <property type="entry name" value="PROTEIN PHOSPHATASE INHIBITOR AND DOPAMINE- AND CAMP-REGULATED NEURONAL PHOSPHOPROTEIN"/>
    <property type="match status" value="1"/>
</dbReference>
<dbReference type="Pfam" id="PF05395">
    <property type="entry name" value="DARPP-32"/>
    <property type="match status" value="1"/>
</dbReference>
<keyword id="KW-0007">Acetylation</keyword>
<keyword id="KW-0119">Carbohydrate metabolism</keyword>
<keyword id="KW-0903">Direct protein sequencing</keyword>
<keyword id="KW-0321">Glycogen metabolism</keyword>
<keyword id="KW-0597">Phosphoprotein</keyword>
<keyword id="KW-0650">Protein phosphatase inhibitor</keyword>
<keyword id="KW-1267">Proteomics identification</keyword>
<keyword id="KW-1185">Reference proteome</keyword>
<sequence length="171" mass="18939">MEQDNSPRKIQFTVPLLEPHLDPEAAEQIRRRRPTPATLVLTSDQSSPEIDEDRIPNPHLKSTLAMSPRQRKKMTRITPTMKELQMMVEHHLGQQQQGEEPEGAAESTGTQESRPPGIPDTEVESRLGTSGTAKKTAECIPKTHERGSKEPSTKEPSTHIPPLDSKGANSV</sequence>
<comment type="function">
    <text>Inhibitor of protein-phosphatase 1. This protein may be important in hormonal control of glycogen metabolism. Hormones that elevate intracellular cAMP increase I-1 activity in many tissues. I-1 activation may impose cAMP control over proteins that are not directly phosphorylated by PKA. Following a rise in intracellular calcium, I-1 is inactivated by calcineurin (or PP2B). Does not inhibit type-2 phosphatases.</text>
</comment>
<comment type="subunit">
    <text evidence="4">Interacts with PPP1R15A.</text>
</comment>
<comment type="interaction">
    <interactant intactId="EBI-1568511">
        <id>Q13522</id>
    </interactant>
    <interactant intactId="EBI-714746">
        <id>O75807</id>
        <label>PPP1R15A</label>
    </interactant>
    <organismsDiffer>false</organismsDiffer>
    <experiments>4</experiments>
</comment>
<comment type="interaction">
    <interactant intactId="EBI-1568511">
        <id>Q13522</id>
    </interactant>
    <interactant intactId="EBI-12954575">
        <id>Q8N4L4</id>
        <label>SPEM1</label>
    </interactant>
    <organismsDiffer>false</organismsDiffer>
    <experiments>2</experiments>
</comment>
<comment type="PTM">
    <text evidence="4">Phosphorylation of Thr-35 is required for activity.</text>
</comment>
<comment type="similarity">
    <text evidence="6">Belongs to the protein phosphatase inhibitor 1 family.</text>
</comment>
<name>PPR1A_HUMAN</name>
<reference key="1">
    <citation type="journal article" date="1996" name="Biochemistry">
        <title>Multiple structural elements define the specificity of recombinant human inhibitor-1 as a protein phosphatase-1 inhibitor.</title>
        <authorList>
            <person name="Endo S."/>
            <person name="Zhou X."/>
            <person name="Connor J."/>
            <person name="Wang B."/>
            <person name="Shenolikar S."/>
        </authorList>
    </citation>
    <scope>NUCLEOTIDE SEQUENCE [MRNA]</scope>
    <scope>PROTEIN SEQUENCE OF 1-23 AND 53-61</scope>
    <scope>MUTAGENESIS OF THR-35</scope>
    <source>
        <tissue>Brain</tissue>
    </source>
</reference>
<reference key="2">
    <citation type="submission" date="2001-11" db="EMBL/GenBank/DDBJ databases">
        <title>Cloning of inhibitor-1 of protein phosphatase type 1 from human heart.</title>
        <authorList>
            <person name="Mishra S."/>
            <person name="Tiwari N."/>
            <person name="Sabbah H.N."/>
            <person name="Gupta R.C."/>
        </authorList>
    </citation>
    <scope>NUCLEOTIDE SEQUENCE [MRNA]</scope>
    <source>
        <tissue>Heart</tissue>
    </source>
</reference>
<reference key="3">
    <citation type="submission" date="2004-06" db="EMBL/GenBank/DDBJ databases">
        <title>Cloning of human full open reading frames in Gateway(TM) system entry vector (pDONR201).</title>
        <authorList>
            <person name="Ebert L."/>
            <person name="Schick M."/>
            <person name="Neubert P."/>
            <person name="Schatten R."/>
            <person name="Henze S."/>
            <person name="Korn B."/>
        </authorList>
    </citation>
    <scope>NUCLEOTIDE SEQUENCE [LARGE SCALE MRNA]</scope>
</reference>
<reference key="4">
    <citation type="journal article" date="2004" name="Genome Res.">
        <title>The status, quality, and expansion of the NIH full-length cDNA project: the Mammalian Gene Collection (MGC).</title>
        <authorList>
            <consortium name="The MGC Project Team"/>
        </authorList>
    </citation>
    <scope>NUCLEOTIDE SEQUENCE [LARGE SCALE MRNA]</scope>
    <source>
        <tissue>Brain</tissue>
    </source>
</reference>
<reference key="5">
    <citation type="journal article" date="2001" name="Mol. Cell. Biol.">
        <title>Growth arrest and DNA damage-inducible protein GADD34 assembles a novel signaling complex containing protein phosphatase 1 and inhibitor 1.</title>
        <authorList>
            <person name="Connor J.H."/>
            <person name="Weiser D.C."/>
            <person name="Li S."/>
            <person name="Hallenbeck J.M."/>
            <person name="Shenolikar S."/>
        </authorList>
    </citation>
    <scope>INTERACTION WITH PPP1R15A</scope>
    <scope>PHOSPHORYLATION AT THR-35</scope>
</reference>
<reference key="6">
    <citation type="journal article" date="2014" name="J. Proteomics">
        <title>An enzyme assisted RP-RPLC approach for in-depth analysis of human liver phosphoproteome.</title>
        <authorList>
            <person name="Bian Y."/>
            <person name="Song C."/>
            <person name="Cheng K."/>
            <person name="Dong M."/>
            <person name="Wang F."/>
            <person name="Huang J."/>
            <person name="Sun D."/>
            <person name="Wang L."/>
            <person name="Ye M."/>
            <person name="Zou H."/>
        </authorList>
    </citation>
    <scope>PHOSPHORYLATION [LARGE SCALE ANALYSIS] AT SER-67</scope>
    <scope>IDENTIFICATION BY MASS SPECTROMETRY [LARGE SCALE ANALYSIS]</scope>
    <source>
        <tissue>Liver</tissue>
    </source>
</reference>
<gene>
    <name type="primary">PPP1R1A</name>
    <name type="synonym">IPP1</name>
</gene>
<organism>
    <name type="scientific">Homo sapiens</name>
    <name type="common">Human</name>
    <dbReference type="NCBI Taxonomy" id="9606"/>
    <lineage>
        <taxon>Eukaryota</taxon>
        <taxon>Metazoa</taxon>
        <taxon>Chordata</taxon>
        <taxon>Craniata</taxon>
        <taxon>Vertebrata</taxon>
        <taxon>Euteleostomi</taxon>
        <taxon>Mammalia</taxon>
        <taxon>Eutheria</taxon>
        <taxon>Euarchontoglires</taxon>
        <taxon>Primates</taxon>
        <taxon>Haplorrhini</taxon>
        <taxon>Catarrhini</taxon>
        <taxon>Hominidae</taxon>
        <taxon>Homo</taxon>
    </lineage>
</organism>
<feature type="chain" id="PRO_0000071477" description="Protein phosphatase 1 regulatory subunit 1A">
    <location>
        <begin position="1"/>
        <end position="171"/>
    </location>
</feature>
<feature type="region of interest" description="Disordered" evidence="3">
    <location>
        <begin position="1"/>
        <end position="171"/>
    </location>
</feature>
<feature type="region of interest" description="Essential for activity">
    <location>
        <begin position="9"/>
        <end position="12"/>
    </location>
</feature>
<feature type="region of interest" description="Essential for activity" evidence="6">
    <location>
        <begin position="42"/>
        <end position="54"/>
    </location>
</feature>
<feature type="region of interest" description="Interaction with PPP1R15A" evidence="4">
    <location>
        <begin position="143"/>
        <end position="171"/>
    </location>
</feature>
<feature type="compositionally biased region" description="Basic and acidic residues" evidence="3">
    <location>
        <begin position="19"/>
        <end position="29"/>
    </location>
</feature>
<feature type="compositionally biased region" description="Basic and acidic residues" evidence="3">
    <location>
        <begin position="135"/>
        <end position="157"/>
    </location>
</feature>
<feature type="modified residue" description="N-acetylmethionine" evidence="1">
    <location>
        <position position="1"/>
    </location>
</feature>
<feature type="modified residue" description="Phosphothreonine; by PKA" evidence="4">
    <location>
        <position position="35"/>
    </location>
</feature>
<feature type="modified residue" description="Phosphoserine" evidence="2">
    <location>
        <position position="43"/>
    </location>
</feature>
<feature type="modified residue" description="Phosphoserine" evidence="2">
    <location>
        <position position="46"/>
    </location>
</feature>
<feature type="modified residue" description="Phosphoserine" evidence="2">
    <location>
        <position position="47"/>
    </location>
</feature>
<feature type="modified residue" description="Phosphoserine" evidence="7">
    <location>
        <position position="67"/>
    </location>
</feature>
<feature type="sequence variant" id="VAR_053898" description="In dbSNP:rs1249958.">
    <original>G</original>
    <variation>E</variation>
    <location>
        <position position="109"/>
    </location>
</feature>
<feature type="sequence variant" id="VAR_053899" description="In dbSNP:rs34376731.">
    <original>G</original>
    <variation>D</variation>
    <location>
        <position position="147"/>
    </location>
</feature>
<feature type="mutagenesis site" description="No activity." evidence="5">
    <original>T</original>
    <variation>A</variation>
    <location>
        <position position="35"/>
    </location>
</feature>
<feature type="mutagenesis site" description="1000-fold reduction in activity, inhibits equally PP1 and PP2A." evidence="5">
    <original>T</original>
    <variation>D</variation>
    <location>
        <position position="35"/>
    </location>
</feature>
<feature type="sequence conflict" description="In Ref. 4; AAH22470." evidence="6" ref="4">
    <original>R</original>
    <variation>Q</variation>
    <location>
        <position position="8"/>
    </location>
</feature>
<feature type="sequence conflict" description="In Ref. 2; AAL48321." evidence="6" ref="2">
    <original>S</original>
    <variation>G</variation>
    <location>
        <position position="43"/>
    </location>
</feature>
<evidence type="ECO:0000250" key="1">
    <source>
        <dbReference type="UniProtKB" id="P01099"/>
    </source>
</evidence>
<evidence type="ECO:0000250" key="2">
    <source>
        <dbReference type="UniProtKB" id="Q9ERT9"/>
    </source>
</evidence>
<evidence type="ECO:0000256" key="3">
    <source>
        <dbReference type="SAM" id="MobiDB-lite"/>
    </source>
</evidence>
<evidence type="ECO:0000269" key="4">
    <source>
    </source>
</evidence>
<evidence type="ECO:0000269" key="5">
    <source>
    </source>
</evidence>
<evidence type="ECO:0000305" key="6"/>
<evidence type="ECO:0007744" key="7">
    <source>
    </source>
</evidence>
<accession>Q13522</accession>
<accession>Q6IB01</accession>
<accession>Q8TBJ2</accession>
<accession>Q8WWV2</accession>